<proteinExistence type="evidence at transcript level"/>
<organism>
    <name type="scientific">Persea americana</name>
    <name type="common">Avocado</name>
    <dbReference type="NCBI Taxonomy" id="3435"/>
    <lineage>
        <taxon>Eukaryota</taxon>
        <taxon>Viridiplantae</taxon>
        <taxon>Streptophyta</taxon>
        <taxon>Embryophyta</taxon>
        <taxon>Tracheophyta</taxon>
        <taxon>Spermatophyta</taxon>
        <taxon>Magnoliopsida</taxon>
        <taxon>Magnoliidae</taxon>
        <taxon>Laurales</taxon>
        <taxon>Lauraceae</taxon>
        <taxon>Persea</taxon>
    </lineage>
</organism>
<sequence>MALTRLLLPISILWFCFYSSHTILQKDPLLICVNGDPGFDQRAYPTYFGPILDEFSSIMGFEPSILSLERFNPVGGPETSPDTDISVDDFGARGDGTDDTKAFEKAWKDACSSGSVLIVPENKNYLLKQITFSGPCKSDLRVKIRGTIEASSDQSDWVGHNRKRWIEFEDISNLTLEGGGTSNGNGETWWDSSCKRKKSLPCKSAPTALTFRSCKNLIVSDLSIKDSQKMHLSFDKCQDVIASNLMVTAPEHSPNTDGIHITGTQRIHVMNSVIGTGDDCISIESGSKMVIATNITCGPGHGISIGSLGDRNSEAHVSGVLVDGGNLFDTTNGLRIKTWQGGSGSAKNIKFQNIVMHNVTNPIIIDQYYCDSKDPCPEQESAVKVSNVAYMNIRGTSASEVAVKFDCSKSSPCQGYIVGNINLVGNGGKETTMSCSNIVQGLLREGLSTFLFMKRRVHECSY</sequence>
<feature type="signal peptide" evidence="2">
    <location>
        <begin position="1"/>
        <end position="22"/>
    </location>
</feature>
<feature type="chain" id="PRO_0000024811" description="Polygalacturonase">
    <location>
        <begin position="23"/>
        <end position="462"/>
    </location>
</feature>
<feature type="active site" description="Proton donor" evidence="1">
    <location>
        <position position="278"/>
    </location>
</feature>
<feature type="active site" evidence="4">
    <location>
        <position position="301"/>
    </location>
</feature>
<feature type="glycosylation site" description="N-linked (GlcNAc...) asparagine" evidence="3">
    <location>
        <position position="173"/>
    </location>
</feature>
<feature type="glycosylation site" description="N-linked (GlcNAc...) asparagine" evidence="3">
    <location>
        <position position="294"/>
    </location>
</feature>
<feature type="glycosylation site" description="N-linked (GlcNAc...) asparagine" evidence="3">
    <location>
        <position position="358"/>
    </location>
</feature>
<feature type="disulfide bond" evidence="1">
    <location>
        <begin position="280"/>
        <end position="297"/>
    </location>
</feature>
<feature type="disulfide bond" evidence="1">
    <location>
        <begin position="407"/>
        <end position="413"/>
    </location>
</feature>
<feature type="disulfide bond" evidence="1">
    <location>
        <begin position="435"/>
        <end position="460"/>
    </location>
</feature>
<feature type="sequence conflict" description="In Ref. 2; AAA32914." evidence="5" ref="2">
    <original>S</original>
    <variation>I</variation>
    <location>
        <position position="182"/>
    </location>
</feature>
<feature type="sequence conflict" description="In Ref. 2; AAA32914." evidence="5" ref="2">
    <original>YIVG</original>
    <variation>ILLE</variation>
    <location>
        <begin position="416"/>
        <end position="419"/>
    </location>
</feature>
<feature type="sequence conflict" description="In Ref. 2; AAA32914." evidence="5" ref="2">
    <original>LLREGLSTFLFMKRRVHECSY</original>
    <variation>TTEGKVYPPSCL</variation>
    <location>
        <begin position="442"/>
        <end position="462"/>
    </location>
</feature>
<keyword id="KW-0134">Cell wall</keyword>
<keyword id="KW-0961">Cell wall biogenesis/degradation</keyword>
<keyword id="KW-1015">Disulfide bond</keyword>
<keyword id="KW-0292">Fruit ripening</keyword>
<keyword id="KW-0325">Glycoprotein</keyword>
<keyword id="KW-0326">Glycosidase</keyword>
<keyword id="KW-0378">Hydrolase</keyword>
<keyword id="KW-0677">Repeat</keyword>
<keyword id="KW-0964">Secreted</keyword>
<keyword id="KW-0732">Signal</keyword>
<accession>Q02096</accession>
<protein>
    <recommendedName>
        <fullName>Polygalacturonase</fullName>
        <shortName>PG</shortName>
        <ecNumber>3.2.1.15</ecNumber>
    </recommendedName>
    <alternativeName>
        <fullName>Pectinase</fullName>
    </alternativeName>
</protein>
<evidence type="ECO:0000250" key="1">
    <source>
        <dbReference type="UniProtKB" id="O74213"/>
    </source>
</evidence>
<evidence type="ECO:0000255" key="2"/>
<evidence type="ECO:0000255" key="3">
    <source>
        <dbReference type="PROSITE-ProRule" id="PRU00498"/>
    </source>
</evidence>
<evidence type="ECO:0000255" key="4">
    <source>
        <dbReference type="PROSITE-ProRule" id="PRU10052"/>
    </source>
</evidence>
<evidence type="ECO:0000305" key="5"/>
<reference key="1">
    <citation type="journal article" date="1993" name="Plant Mol. Biol.">
        <title>Cloning and characterization of avocado fruit mRNAs and their expression during ripening and low-temperature storage.</title>
        <authorList>
            <person name="Dopico B."/>
            <person name="Lowe A.L."/>
            <person name="Wilson I.D."/>
            <person name="Merodio C."/>
            <person name="Grierson D."/>
        </authorList>
    </citation>
    <scope>NUCLEOTIDE SEQUENCE [MRNA]</scope>
    <source>
        <strain>cv. Hass</strain>
        <tissue>Pericarp</tissue>
    </source>
</reference>
<reference key="2">
    <citation type="journal article" date="1993" name="Plant Physiol.">
        <title>Ripening-related polygalacturonase cDNA from avocado.</title>
        <authorList>
            <person name="Kutsunai S.Y."/>
            <person name="Lin A.C."/>
            <person name="Percival F.W."/>
            <person name="Laties G.G."/>
            <person name="Christoffersen R.E."/>
        </authorList>
    </citation>
    <scope>NUCLEOTIDE SEQUENCE [MRNA]</scope>
    <source>
        <strain>cv. Hass</strain>
        <tissue>Mesocarp</tissue>
    </source>
</reference>
<comment type="function">
    <text>Acts in concert with the pectinesterase, in the ripening process. Is involved in cell wall metabolism, specifically in polyuronide degradation.</text>
</comment>
<comment type="catalytic activity">
    <reaction>
        <text>(1,4-alpha-D-galacturonosyl)n+m + H2O = (1,4-alpha-D-galacturonosyl)n + (1,4-alpha-D-galacturonosyl)m.</text>
        <dbReference type="EC" id="3.2.1.15"/>
    </reaction>
</comment>
<comment type="subcellular location">
    <subcellularLocation>
        <location>Secreted</location>
    </subcellularLocation>
    <subcellularLocation>
        <location>Secreted</location>
        <location>Cell wall</location>
    </subcellularLocation>
</comment>
<comment type="developmental stage">
    <text>In ripening fruit.</text>
</comment>
<comment type="similarity">
    <text evidence="5">Belongs to the glycosyl hydrolase 28 family.</text>
</comment>
<dbReference type="EC" id="3.2.1.15"/>
<dbReference type="EMBL" id="X66426">
    <property type="protein sequence ID" value="CAA47055.1"/>
    <property type="molecule type" value="mRNA"/>
</dbReference>
<dbReference type="EMBL" id="L06094">
    <property type="protein sequence ID" value="AAA32914.1"/>
    <property type="molecule type" value="mRNA"/>
</dbReference>
<dbReference type="PIR" id="S31195">
    <property type="entry name" value="S31195"/>
</dbReference>
<dbReference type="SMR" id="Q02096"/>
<dbReference type="CAZy" id="GH28">
    <property type="family name" value="Glycoside Hydrolase Family 28"/>
</dbReference>
<dbReference type="BioCyc" id="MetaCyc:MONOMER-14861"/>
<dbReference type="GO" id="GO:0005576">
    <property type="term" value="C:extracellular region"/>
    <property type="evidence" value="ECO:0007669"/>
    <property type="project" value="UniProtKB-SubCell"/>
</dbReference>
<dbReference type="GO" id="GO:0004650">
    <property type="term" value="F:polygalacturonase activity"/>
    <property type="evidence" value="ECO:0007669"/>
    <property type="project" value="UniProtKB-EC"/>
</dbReference>
<dbReference type="GO" id="GO:0005975">
    <property type="term" value="P:carbohydrate metabolic process"/>
    <property type="evidence" value="ECO:0007669"/>
    <property type="project" value="InterPro"/>
</dbReference>
<dbReference type="GO" id="GO:0071555">
    <property type="term" value="P:cell wall organization"/>
    <property type="evidence" value="ECO:0007669"/>
    <property type="project" value="UniProtKB-KW"/>
</dbReference>
<dbReference type="GO" id="GO:0009835">
    <property type="term" value="P:fruit ripening"/>
    <property type="evidence" value="ECO:0007669"/>
    <property type="project" value="UniProtKB-KW"/>
</dbReference>
<dbReference type="FunFam" id="2.160.20.10:FF:000028">
    <property type="entry name" value="Polygalacturonase QRT2"/>
    <property type="match status" value="1"/>
</dbReference>
<dbReference type="Gene3D" id="2.160.20.10">
    <property type="entry name" value="Single-stranded right-handed beta-helix, Pectin lyase-like"/>
    <property type="match status" value="1"/>
</dbReference>
<dbReference type="InterPro" id="IPR000743">
    <property type="entry name" value="Glyco_hydro_28"/>
</dbReference>
<dbReference type="InterPro" id="IPR012334">
    <property type="entry name" value="Pectin_lyas_fold"/>
</dbReference>
<dbReference type="InterPro" id="IPR011050">
    <property type="entry name" value="Pectin_lyase_fold/virulence"/>
</dbReference>
<dbReference type="PANTHER" id="PTHR31375">
    <property type="match status" value="1"/>
</dbReference>
<dbReference type="Pfam" id="PF00295">
    <property type="entry name" value="Glyco_hydro_28"/>
    <property type="match status" value="1"/>
</dbReference>
<dbReference type="SUPFAM" id="SSF51126">
    <property type="entry name" value="Pectin lyase-like"/>
    <property type="match status" value="1"/>
</dbReference>
<dbReference type="PROSITE" id="PS00502">
    <property type="entry name" value="POLYGALACTURONASE"/>
    <property type="match status" value="1"/>
</dbReference>
<name>PGLR_PERAE</name>